<dbReference type="EMBL" id="CP000848">
    <property type="protein sequence ID" value="ABV76576.1"/>
    <property type="molecule type" value="Genomic_DNA"/>
</dbReference>
<dbReference type="RefSeq" id="WP_012151139.1">
    <property type="nucleotide sequence ID" value="NZ_CP121767.1"/>
</dbReference>
<dbReference type="SMR" id="A8GT51"/>
<dbReference type="GeneID" id="79937652"/>
<dbReference type="KEGG" id="rri:A1G_05465"/>
<dbReference type="HOGENOM" id="CLU_131047_1_5_5"/>
<dbReference type="Proteomes" id="UP000006832">
    <property type="component" value="Chromosome"/>
</dbReference>
<dbReference type="GO" id="GO:0022625">
    <property type="term" value="C:cytosolic large ribosomal subunit"/>
    <property type="evidence" value="ECO:0007669"/>
    <property type="project" value="TreeGrafter"/>
</dbReference>
<dbReference type="GO" id="GO:0003735">
    <property type="term" value="F:structural constituent of ribosome"/>
    <property type="evidence" value="ECO:0007669"/>
    <property type="project" value="InterPro"/>
</dbReference>
<dbReference type="GO" id="GO:0006412">
    <property type="term" value="P:translation"/>
    <property type="evidence" value="ECO:0007669"/>
    <property type="project" value="UniProtKB-UniRule"/>
</dbReference>
<dbReference type="CDD" id="cd01658">
    <property type="entry name" value="Ribosomal_L30"/>
    <property type="match status" value="1"/>
</dbReference>
<dbReference type="Gene3D" id="3.30.1390.20">
    <property type="entry name" value="Ribosomal protein L30, ferredoxin-like fold domain"/>
    <property type="match status" value="1"/>
</dbReference>
<dbReference type="HAMAP" id="MF_01371_B">
    <property type="entry name" value="Ribosomal_uL30_B"/>
    <property type="match status" value="1"/>
</dbReference>
<dbReference type="InterPro" id="IPR036919">
    <property type="entry name" value="Ribo_uL30_ferredoxin-like_sf"/>
</dbReference>
<dbReference type="InterPro" id="IPR005996">
    <property type="entry name" value="Ribosomal_uL30_bac-type"/>
</dbReference>
<dbReference type="InterPro" id="IPR016082">
    <property type="entry name" value="Ribosomal_uL30_ferredoxin-like"/>
</dbReference>
<dbReference type="NCBIfam" id="TIGR01308">
    <property type="entry name" value="rpmD_bact"/>
    <property type="match status" value="1"/>
</dbReference>
<dbReference type="PANTHER" id="PTHR15892:SF2">
    <property type="entry name" value="LARGE RIBOSOMAL SUBUNIT PROTEIN UL30M"/>
    <property type="match status" value="1"/>
</dbReference>
<dbReference type="PANTHER" id="PTHR15892">
    <property type="entry name" value="MITOCHONDRIAL RIBOSOMAL PROTEIN L30"/>
    <property type="match status" value="1"/>
</dbReference>
<dbReference type="Pfam" id="PF00327">
    <property type="entry name" value="Ribosomal_L30"/>
    <property type="match status" value="1"/>
</dbReference>
<dbReference type="PIRSF" id="PIRSF002211">
    <property type="entry name" value="Ribosomal_L30_bac-type"/>
    <property type="match status" value="1"/>
</dbReference>
<dbReference type="SUPFAM" id="SSF55129">
    <property type="entry name" value="Ribosomal protein L30p/L7e"/>
    <property type="match status" value="1"/>
</dbReference>
<comment type="subunit">
    <text evidence="1">Part of the 50S ribosomal subunit.</text>
</comment>
<comment type="similarity">
    <text evidence="1">Belongs to the universal ribosomal protein uL30 family.</text>
</comment>
<evidence type="ECO:0000255" key="1">
    <source>
        <dbReference type="HAMAP-Rule" id="MF_01371"/>
    </source>
</evidence>
<evidence type="ECO:0000305" key="2"/>
<feature type="chain" id="PRO_1000056102" description="Large ribosomal subunit protein uL30">
    <location>
        <begin position="1"/>
        <end position="63"/>
    </location>
</feature>
<name>RL30_RICRS</name>
<organism>
    <name type="scientific">Rickettsia rickettsii (strain Sheila Smith)</name>
    <dbReference type="NCBI Taxonomy" id="392021"/>
    <lineage>
        <taxon>Bacteria</taxon>
        <taxon>Pseudomonadati</taxon>
        <taxon>Pseudomonadota</taxon>
        <taxon>Alphaproteobacteria</taxon>
        <taxon>Rickettsiales</taxon>
        <taxon>Rickettsiaceae</taxon>
        <taxon>Rickettsieae</taxon>
        <taxon>Rickettsia</taxon>
        <taxon>spotted fever group</taxon>
    </lineage>
</organism>
<accession>A8GT51</accession>
<protein>
    <recommendedName>
        <fullName evidence="1">Large ribosomal subunit protein uL30</fullName>
    </recommendedName>
    <alternativeName>
        <fullName evidence="2">50S ribosomal protein L30</fullName>
    </alternativeName>
</protein>
<reference key="1">
    <citation type="submission" date="2007-09" db="EMBL/GenBank/DDBJ databases">
        <title>Complete genome sequence of Rickettsia rickettsii.</title>
        <authorList>
            <person name="Madan A."/>
            <person name="Fahey J."/>
            <person name="Helton E."/>
            <person name="Ketteman M."/>
            <person name="Madan A."/>
            <person name="Rodrigues S."/>
            <person name="Sanchez A."/>
            <person name="Dasch G."/>
            <person name="Eremeeva M."/>
        </authorList>
    </citation>
    <scope>NUCLEOTIDE SEQUENCE [LARGE SCALE GENOMIC DNA]</scope>
    <source>
        <strain>Sheila Smith</strain>
    </source>
</reference>
<sequence>MNNKINNIKITQVHSAIGRKYDQRLILVGLGLNKINKSVILANTNSIKGMVKKVKHLLKIENM</sequence>
<gene>
    <name evidence="1" type="primary">rpmD</name>
    <name type="ordered locus">A1G_05465</name>
</gene>
<proteinExistence type="inferred from homology"/>
<keyword id="KW-0687">Ribonucleoprotein</keyword>
<keyword id="KW-0689">Ribosomal protein</keyword>